<dbReference type="EC" id="3.6.1.9" evidence="1"/>
<dbReference type="EMBL" id="AP009178">
    <property type="protein sequence ID" value="BAF70632.1"/>
    <property type="molecule type" value="Genomic_DNA"/>
</dbReference>
<dbReference type="RefSeq" id="WP_012082895.1">
    <property type="nucleotide sequence ID" value="NC_009662.1"/>
</dbReference>
<dbReference type="SMR" id="A6Q573"/>
<dbReference type="FunCoup" id="A6Q573">
    <property type="interactions" value="293"/>
</dbReference>
<dbReference type="STRING" id="387092.NIS_1525"/>
<dbReference type="KEGG" id="nis:NIS_1525"/>
<dbReference type="eggNOG" id="COG0424">
    <property type="taxonomic scope" value="Bacteria"/>
</dbReference>
<dbReference type="HOGENOM" id="CLU_040416_2_2_7"/>
<dbReference type="InParanoid" id="A6Q573"/>
<dbReference type="OrthoDB" id="5339137at2"/>
<dbReference type="Proteomes" id="UP000001118">
    <property type="component" value="Chromosome"/>
</dbReference>
<dbReference type="GO" id="GO:0005737">
    <property type="term" value="C:cytoplasm"/>
    <property type="evidence" value="ECO:0007669"/>
    <property type="project" value="UniProtKB-SubCell"/>
</dbReference>
<dbReference type="GO" id="GO:0047429">
    <property type="term" value="F:nucleoside triphosphate diphosphatase activity"/>
    <property type="evidence" value="ECO:0007669"/>
    <property type="project" value="UniProtKB-EC"/>
</dbReference>
<dbReference type="GO" id="GO:0009117">
    <property type="term" value="P:nucleotide metabolic process"/>
    <property type="evidence" value="ECO:0007669"/>
    <property type="project" value="UniProtKB-KW"/>
</dbReference>
<dbReference type="Gene3D" id="3.90.950.10">
    <property type="match status" value="1"/>
</dbReference>
<dbReference type="HAMAP" id="MF_00528">
    <property type="entry name" value="Maf"/>
    <property type="match status" value="1"/>
</dbReference>
<dbReference type="InterPro" id="IPR029001">
    <property type="entry name" value="ITPase-like_fam"/>
</dbReference>
<dbReference type="InterPro" id="IPR003697">
    <property type="entry name" value="Maf-like"/>
</dbReference>
<dbReference type="NCBIfam" id="TIGR00172">
    <property type="entry name" value="maf"/>
    <property type="match status" value="1"/>
</dbReference>
<dbReference type="NCBIfam" id="NF003141">
    <property type="entry name" value="PRK04056.1"/>
    <property type="match status" value="1"/>
</dbReference>
<dbReference type="PANTHER" id="PTHR43213">
    <property type="entry name" value="BIFUNCTIONAL DTTP/UTP PYROPHOSPHATASE/METHYLTRANSFERASE PROTEIN-RELATED"/>
    <property type="match status" value="1"/>
</dbReference>
<dbReference type="PANTHER" id="PTHR43213:SF5">
    <property type="entry name" value="BIFUNCTIONAL DTTP_UTP PYROPHOSPHATASE_METHYLTRANSFERASE PROTEIN-RELATED"/>
    <property type="match status" value="1"/>
</dbReference>
<dbReference type="Pfam" id="PF02545">
    <property type="entry name" value="Maf"/>
    <property type="match status" value="1"/>
</dbReference>
<dbReference type="PIRSF" id="PIRSF006305">
    <property type="entry name" value="Maf"/>
    <property type="match status" value="1"/>
</dbReference>
<dbReference type="SUPFAM" id="SSF52972">
    <property type="entry name" value="ITPase-like"/>
    <property type="match status" value="1"/>
</dbReference>
<feature type="chain" id="PRO_1000060951" description="Nucleoside triphosphate pyrophosphatase">
    <location>
        <begin position="1"/>
        <end position="185"/>
    </location>
</feature>
<feature type="active site" description="Proton acceptor" evidence="1">
    <location>
        <position position="70"/>
    </location>
</feature>
<name>NTPP_NITSB</name>
<comment type="function">
    <text evidence="1">Nucleoside triphosphate pyrophosphatase. May have a dual role in cell division arrest and in preventing the incorporation of modified nucleotides into cellular nucleic acids.</text>
</comment>
<comment type="catalytic activity">
    <reaction evidence="1">
        <text>a ribonucleoside 5'-triphosphate + H2O = a ribonucleoside 5'-phosphate + diphosphate + H(+)</text>
        <dbReference type="Rhea" id="RHEA:23996"/>
        <dbReference type="ChEBI" id="CHEBI:15377"/>
        <dbReference type="ChEBI" id="CHEBI:15378"/>
        <dbReference type="ChEBI" id="CHEBI:33019"/>
        <dbReference type="ChEBI" id="CHEBI:58043"/>
        <dbReference type="ChEBI" id="CHEBI:61557"/>
        <dbReference type="EC" id="3.6.1.9"/>
    </reaction>
</comment>
<comment type="catalytic activity">
    <reaction evidence="1">
        <text>a 2'-deoxyribonucleoside 5'-triphosphate + H2O = a 2'-deoxyribonucleoside 5'-phosphate + diphosphate + H(+)</text>
        <dbReference type="Rhea" id="RHEA:44644"/>
        <dbReference type="ChEBI" id="CHEBI:15377"/>
        <dbReference type="ChEBI" id="CHEBI:15378"/>
        <dbReference type="ChEBI" id="CHEBI:33019"/>
        <dbReference type="ChEBI" id="CHEBI:61560"/>
        <dbReference type="ChEBI" id="CHEBI:65317"/>
        <dbReference type="EC" id="3.6.1.9"/>
    </reaction>
</comment>
<comment type="cofactor">
    <cofactor evidence="1">
        <name>a divalent metal cation</name>
        <dbReference type="ChEBI" id="CHEBI:60240"/>
    </cofactor>
</comment>
<comment type="subcellular location">
    <subcellularLocation>
        <location evidence="1">Cytoplasm</location>
    </subcellularLocation>
</comment>
<comment type="similarity">
    <text evidence="1">Belongs to the Maf family.</text>
</comment>
<gene>
    <name type="ordered locus">NIS_1525</name>
</gene>
<sequence>MIRLASTSETRAKLLQDTGIEFIQSPVDFDEEELLKVYKNPRDFVCAAARGKMEAAVEKYGLEIPIVAADTVVAVSDEILRKAKDEEEARKILQKQSGNKVDIITCMIYKDKEKTVEDLDVTSYIFAPFDEEDLQNYLKSGQWRGKAGACMVEGFCKKYIKEVLGRESTAMGLQVERLAEIAKDL</sequence>
<reference key="1">
    <citation type="journal article" date="2007" name="Proc. Natl. Acad. Sci. U.S.A.">
        <title>Deep-sea vent epsilon-proteobacterial genomes provide insights into emergence of pathogens.</title>
        <authorList>
            <person name="Nakagawa S."/>
            <person name="Takaki Y."/>
            <person name="Shimamura S."/>
            <person name="Reysenbach A.-L."/>
            <person name="Takai K."/>
            <person name="Horikoshi K."/>
        </authorList>
    </citation>
    <scope>NUCLEOTIDE SEQUENCE [LARGE SCALE GENOMIC DNA]</scope>
    <source>
        <strain>SB155-2</strain>
    </source>
</reference>
<evidence type="ECO:0000255" key="1">
    <source>
        <dbReference type="HAMAP-Rule" id="MF_00528"/>
    </source>
</evidence>
<accession>A6Q573</accession>
<protein>
    <recommendedName>
        <fullName evidence="1">Nucleoside triphosphate pyrophosphatase</fullName>
        <ecNumber evidence="1">3.6.1.9</ecNumber>
    </recommendedName>
    <alternativeName>
        <fullName evidence="1">Nucleotide pyrophosphatase</fullName>
        <shortName evidence="1">Nucleotide PPase</shortName>
    </alternativeName>
</protein>
<keyword id="KW-0963">Cytoplasm</keyword>
<keyword id="KW-0378">Hydrolase</keyword>
<keyword id="KW-0546">Nucleotide metabolism</keyword>
<keyword id="KW-1185">Reference proteome</keyword>
<proteinExistence type="inferred from homology"/>
<organism>
    <name type="scientific">Nitratiruptor sp. (strain SB155-2)</name>
    <dbReference type="NCBI Taxonomy" id="387092"/>
    <lineage>
        <taxon>Bacteria</taxon>
        <taxon>Pseudomonadati</taxon>
        <taxon>Campylobacterota</taxon>
        <taxon>Epsilonproteobacteria</taxon>
        <taxon>Nautiliales</taxon>
        <taxon>Nitratiruptoraceae</taxon>
        <taxon>Nitratiruptor</taxon>
    </lineage>
</organism>